<accession>A1S224</accession>
<evidence type="ECO:0000255" key="1">
    <source>
        <dbReference type="HAMAP-Rule" id="MF_01309"/>
    </source>
</evidence>
<evidence type="ECO:0000305" key="2"/>
<keyword id="KW-1185">Reference proteome</keyword>
<keyword id="KW-0687">Ribonucleoprotein</keyword>
<keyword id="KW-0689">Ribosomal protein</keyword>
<keyword id="KW-0694">RNA-binding</keyword>
<keyword id="KW-0699">rRNA-binding</keyword>
<name>RS3_SHEAM</name>
<dbReference type="EMBL" id="CP000507">
    <property type="protein sequence ID" value="ABL98430.1"/>
    <property type="molecule type" value="Genomic_DNA"/>
</dbReference>
<dbReference type="RefSeq" id="WP_011758340.1">
    <property type="nucleotide sequence ID" value="NC_008700.1"/>
</dbReference>
<dbReference type="SMR" id="A1S224"/>
<dbReference type="STRING" id="326297.Sama_0219"/>
<dbReference type="KEGG" id="saz:Sama_0219"/>
<dbReference type="eggNOG" id="COG0092">
    <property type="taxonomic scope" value="Bacteria"/>
</dbReference>
<dbReference type="HOGENOM" id="CLU_058591_0_2_6"/>
<dbReference type="OrthoDB" id="9806396at2"/>
<dbReference type="Proteomes" id="UP000009175">
    <property type="component" value="Chromosome"/>
</dbReference>
<dbReference type="GO" id="GO:0022627">
    <property type="term" value="C:cytosolic small ribosomal subunit"/>
    <property type="evidence" value="ECO:0007669"/>
    <property type="project" value="TreeGrafter"/>
</dbReference>
<dbReference type="GO" id="GO:0003729">
    <property type="term" value="F:mRNA binding"/>
    <property type="evidence" value="ECO:0007669"/>
    <property type="project" value="UniProtKB-UniRule"/>
</dbReference>
<dbReference type="GO" id="GO:0019843">
    <property type="term" value="F:rRNA binding"/>
    <property type="evidence" value="ECO:0007669"/>
    <property type="project" value="UniProtKB-UniRule"/>
</dbReference>
<dbReference type="GO" id="GO:0003735">
    <property type="term" value="F:structural constituent of ribosome"/>
    <property type="evidence" value="ECO:0007669"/>
    <property type="project" value="InterPro"/>
</dbReference>
<dbReference type="GO" id="GO:0006412">
    <property type="term" value="P:translation"/>
    <property type="evidence" value="ECO:0007669"/>
    <property type="project" value="UniProtKB-UniRule"/>
</dbReference>
<dbReference type="CDD" id="cd02412">
    <property type="entry name" value="KH-II_30S_S3"/>
    <property type="match status" value="1"/>
</dbReference>
<dbReference type="FunFam" id="3.30.1140.32:FF:000001">
    <property type="entry name" value="30S ribosomal protein S3"/>
    <property type="match status" value="1"/>
</dbReference>
<dbReference type="FunFam" id="3.30.300.20:FF:000001">
    <property type="entry name" value="30S ribosomal protein S3"/>
    <property type="match status" value="1"/>
</dbReference>
<dbReference type="Gene3D" id="3.30.300.20">
    <property type="match status" value="1"/>
</dbReference>
<dbReference type="Gene3D" id="3.30.1140.32">
    <property type="entry name" value="Ribosomal protein S3, C-terminal domain"/>
    <property type="match status" value="1"/>
</dbReference>
<dbReference type="HAMAP" id="MF_01309_B">
    <property type="entry name" value="Ribosomal_uS3_B"/>
    <property type="match status" value="1"/>
</dbReference>
<dbReference type="InterPro" id="IPR004087">
    <property type="entry name" value="KH_dom"/>
</dbReference>
<dbReference type="InterPro" id="IPR015946">
    <property type="entry name" value="KH_dom-like_a/b"/>
</dbReference>
<dbReference type="InterPro" id="IPR004044">
    <property type="entry name" value="KH_dom_type_2"/>
</dbReference>
<dbReference type="InterPro" id="IPR009019">
    <property type="entry name" value="KH_sf_prok-type"/>
</dbReference>
<dbReference type="InterPro" id="IPR036419">
    <property type="entry name" value="Ribosomal_S3_C_sf"/>
</dbReference>
<dbReference type="InterPro" id="IPR005704">
    <property type="entry name" value="Ribosomal_uS3_bac-typ"/>
</dbReference>
<dbReference type="InterPro" id="IPR001351">
    <property type="entry name" value="Ribosomal_uS3_C"/>
</dbReference>
<dbReference type="InterPro" id="IPR018280">
    <property type="entry name" value="Ribosomal_uS3_CS"/>
</dbReference>
<dbReference type="NCBIfam" id="TIGR01009">
    <property type="entry name" value="rpsC_bact"/>
    <property type="match status" value="1"/>
</dbReference>
<dbReference type="PANTHER" id="PTHR11760">
    <property type="entry name" value="30S/40S RIBOSOMAL PROTEIN S3"/>
    <property type="match status" value="1"/>
</dbReference>
<dbReference type="PANTHER" id="PTHR11760:SF19">
    <property type="entry name" value="SMALL RIBOSOMAL SUBUNIT PROTEIN US3C"/>
    <property type="match status" value="1"/>
</dbReference>
<dbReference type="Pfam" id="PF07650">
    <property type="entry name" value="KH_2"/>
    <property type="match status" value="1"/>
</dbReference>
<dbReference type="Pfam" id="PF00189">
    <property type="entry name" value="Ribosomal_S3_C"/>
    <property type="match status" value="1"/>
</dbReference>
<dbReference type="SMART" id="SM00322">
    <property type="entry name" value="KH"/>
    <property type="match status" value="1"/>
</dbReference>
<dbReference type="SUPFAM" id="SSF54814">
    <property type="entry name" value="Prokaryotic type KH domain (KH-domain type II)"/>
    <property type="match status" value="1"/>
</dbReference>
<dbReference type="SUPFAM" id="SSF54821">
    <property type="entry name" value="Ribosomal protein S3 C-terminal domain"/>
    <property type="match status" value="1"/>
</dbReference>
<dbReference type="PROSITE" id="PS50823">
    <property type="entry name" value="KH_TYPE_2"/>
    <property type="match status" value="1"/>
</dbReference>
<dbReference type="PROSITE" id="PS00548">
    <property type="entry name" value="RIBOSOMAL_S3"/>
    <property type="match status" value="1"/>
</dbReference>
<feature type="chain" id="PRO_0000293878" description="Small ribosomal subunit protein uS3">
    <location>
        <begin position="1"/>
        <end position="230"/>
    </location>
</feature>
<feature type="domain" description="KH type-2" evidence="1">
    <location>
        <begin position="39"/>
        <end position="107"/>
    </location>
</feature>
<proteinExistence type="inferred from homology"/>
<reference key="1">
    <citation type="submission" date="2006-12" db="EMBL/GenBank/DDBJ databases">
        <title>Complete sequence of Shewanella amazonensis SB2B.</title>
        <authorList>
            <consortium name="US DOE Joint Genome Institute"/>
            <person name="Copeland A."/>
            <person name="Lucas S."/>
            <person name="Lapidus A."/>
            <person name="Barry K."/>
            <person name="Detter J.C."/>
            <person name="Glavina del Rio T."/>
            <person name="Hammon N."/>
            <person name="Israni S."/>
            <person name="Dalin E."/>
            <person name="Tice H."/>
            <person name="Pitluck S."/>
            <person name="Munk A.C."/>
            <person name="Brettin T."/>
            <person name="Bruce D."/>
            <person name="Han C."/>
            <person name="Tapia R."/>
            <person name="Gilna P."/>
            <person name="Schmutz J."/>
            <person name="Larimer F."/>
            <person name="Land M."/>
            <person name="Hauser L."/>
            <person name="Kyrpides N."/>
            <person name="Mikhailova N."/>
            <person name="Fredrickson J."/>
            <person name="Richardson P."/>
        </authorList>
    </citation>
    <scope>NUCLEOTIDE SEQUENCE [LARGE SCALE GENOMIC DNA]</scope>
    <source>
        <strain>ATCC BAA-1098 / SB2B</strain>
    </source>
</reference>
<comment type="function">
    <text evidence="1">Binds the lower part of the 30S subunit head. Binds mRNA in the 70S ribosome, positioning it for translation.</text>
</comment>
<comment type="subunit">
    <text evidence="1">Part of the 30S ribosomal subunit. Forms a tight complex with proteins S10 and S14.</text>
</comment>
<comment type="similarity">
    <text evidence="1">Belongs to the universal ribosomal protein uS3 family.</text>
</comment>
<gene>
    <name evidence="1" type="primary">rpsC</name>
    <name type="ordered locus">Sama_0219</name>
</gene>
<protein>
    <recommendedName>
        <fullName evidence="1">Small ribosomal subunit protein uS3</fullName>
    </recommendedName>
    <alternativeName>
        <fullName evidence="2">30S ribosomal protein S3</fullName>
    </alternativeName>
</protein>
<sequence length="230" mass="25835">MGQKVHPNGIRLGITKPWISTWYADKSDYANNLHSDWEVRKFLEKKLEAASVSKIVIERPAKSIRVTIHTARPGVVIGKKGEDVEVLRAEVAKISGTPAQINIAEIRKPELDAKLVADSIAQQLERRVMFRRAMKRAVQNAMRIGAQGIKVEVSGRLGGAEIARTEWYREGRVPLHTLRADIDYATSESHTTYGVIGIKVWVFKGEVLDGMLPQVEEPKQQQPKRKPRGK</sequence>
<organism>
    <name type="scientific">Shewanella amazonensis (strain ATCC BAA-1098 / SB2B)</name>
    <dbReference type="NCBI Taxonomy" id="326297"/>
    <lineage>
        <taxon>Bacteria</taxon>
        <taxon>Pseudomonadati</taxon>
        <taxon>Pseudomonadota</taxon>
        <taxon>Gammaproteobacteria</taxon>
        <taxon>Alteromonadales</taxon>
        <taxon>Shewanellaceae</taxon>
        <taxon>Shewanella</taxon>
    </lineage>
</organism>